<sequence length="87" mass="9684">MANIKSAKKRAIQSEKARKHNASRRSMMRTFIKKVYAAIEAGDKAAAQKAFNEMQPIVDRQAAKGLIHKNKAARHKANLTAQINKLA</sequence>
<gene>
    <name evidence="1" type="primary">rpsT</name>
    <name type="ordered locus">ECS88_0022</name>
</gene>
<organism>
    <name type="scientific">Escherichia coli O45:K1 (strain S88 / ExPEC)</name>
    <dbReference type="NCBI Taxonomy" id="585035"/>
    <lineage>
        <taxon>Bacteria</taxon>
        <taxon>Pseudomonadati</taxon>
        <taxon>Pseudomonadota</taxon>
        <taxon>Gammaproteobacteria</taxon>
        <taxon>Enterobacterales</taxon>
        <taxon>Enterobacteriaceae</taxon>
        <taxon>Escherichia</taxon>
    </lineage>
</organism>
<reference key="1">
    <citation type="journal article" date="2009" name="PLoS Genet.">
        <title>Organised genome dynamics in the Escherichia coli species results in highly diverse adaptive paths.</title>
        <authorList>
            <person name="Touchon M."/>
            <person name="Hoede C."/>
            <person name="Tenaillon O."/>
            <person name="Barbe V."/>
            <person name="Baeriswyl S."/>
            <person name="Bidet P."/>
            <person name="Bingen E."/>
            <person name="Bonacorsi S."/>
            <person name="Bouchier C."/>
            <person name="Bouvet O."/>
            <person name="Calteau A."/>
            <person name="Chiapello H."/>
            <person name="Clermont O."/>
            <person name="Cruveiller S."/>
            <person name="Danchin A."/>
            <person name="Diard M."/>
            <person name="Dossat C."/>
            <person name="Karoui M.E."/>
            <person name="Frapy E."/>
            <person name="Garry L."/>
            <person name="Ghigo J.M."/>
            <person name="Gilles A.M."/>
            <person name="Johnson J."/>
            <person name="Le Bouguenec C."/>
            <person name="Lescat M."/>
            <person name="Mangenot S."/>
            <person name="Martinez-Jehanne V."/>
            <person name="Matic I."/>
            <person name="Nassif X."/>
            <person name="Oztas S."/>
            <person name="Petit M.A."/>
            <person name="Pichon C."/>
            <person name="Rouy Z."/>
            <person name="Ruf C.S."/>
            <person name="Schneider D."/>
            <person name="Tourret J."/>
            <person name="Vacherie B."/>
            <person name="Vallenet D."/>
            <person name="Medigue C."/>
            <person name="Rocha E.P.C."/>
            <person name="Denamur E."/>
        </authorList>
    </citation>
    <scope>NUCLEOTIDE SEQUENCE [LARGE SCALE GENOMIC DNA]</scope>
    <source>
        <strain>S88 / ExPEC</strain>
    </source>
</reference>
<evidence type="ECO:0000255" key="1">
    <source>
        <dbReference type="HAMAP-Rule" id="MF_00500"/>
    </source>
</evidence>
<evidence type="ECO:0000256" key="2">
    <source>
        <dbReference type="SAM" id="MobiDB-lite"/>
    </source>
</evidence>
<evidence type="ECO:0000305" key="3"/>
<keyword id="KW-1185">Reference proteome</keyword>
<keyword id="KW-0687">Ribonucleoprotein</keyword>
<keyword id="KW-0689">Ribosomal protein</keyword>
<keyword id="KW-0694">RNA-binding</keyword>
<keyword id="KW-0699">rRNA-binding</keyword>
<accession>B7MAE3</accession>
<proteinExistence type="inferred from homology"/>
<dbReference type="EMBL" id="CU928161">
    <property type="protein sequence ID" value="CAR01389.1"/>
    <property type="molecule type" value="Genomic_DNA"/>
</dbReference>
<dbReference type="RefSeq" id="WP_001274021.1">
    <property type="nucleotide sequence ID" value="NC_011742.1"/>
</dbReference>
<dbReference type="EMDB" id="EMD-7014"/>
<dbReference type="EMDB" id="EMD-7015"/>
<dbReference type="EMDB" id="EMD-7016"/>
<dbReference type="EMDB" id="EMD-7970"/>
<dbReference type="EMDB" id="EMD-8621"/>
<dbReference type="EMDB" id="EMD-8826"/>
<dbReference type="EMDB" id="EMD-8829"/>
<dbReference type="SMR" id="B7MAE3"/>
<dbReference type="IntAct" id="B7MAE3">
    <property type="interactions" value="1"/>
</dbReference>
<dbReference type="GeneID" id="93777413"/>
<dbReference type="KEGG" id="ecz:ECS88_0022"/>
<dbReference type="HOGENOM" id="CLU_160655_4_0_6"/>
<dbReference type="Proteomes" id="UP000000747">
    <property type="component" value="Chromosome"/>
</dbReference>
<dbReference type="GO" id="GO:0005829">
    <property type="term" value="C:cytosol"/>
    <property type="evidence" value="ECO:0007669"/>
    <property type="project" value="TreeGrafter"/>
</dbReference>
<dbReference type="GO" id="GO:0015935">
    <property type="term" value="C:small ribosomal subunit"/>
    <property type="evidence" value="ECO:0007669"/>
    <property type="project" value="TreeGrafter"/>
</dbReference>
<dbReference type="GO" id="GO:0070181">
    <property type="term" value="F:small ribosomal subunit rRNA binding"/>
    <property type="evidence" value="ECO:0007669"/>
    <property type="project" value="TreeGrafter"/>
</dbReference>
<dbReference type="GO" id="GO:0003735">
    <property type="term" value="F:structural constituent of ribosome"/>
    <property type="evidence" value="ECO:0007669"/>
    <property type="project" value="InterPro"/>
</dbReference>
<dbReference type="GO" id="GO:0006412">
    <property type="term" value="P:translation"/>
    <property type="evidence" value="ECO:0007669"/>
    <property type="project" value="UniProtKB-UniRule"/>
</dbReference>
<dbReference type="FunFam" id="1.20.58.110:FF:000001">
    <property type="entry name" value="30S ribosomal protein S20"/>
    <property type="match status" value="1"/>
</dbReference>
<dbReference type="Gene3D" id="1.20.58.110">
    <property type="entry name" value="Ribosomal protein S20"/>
    <property type="match status" value="1"/>
</dbReference>
<dbReference type="HAMAP" id="MF_00500">
    <property type="entry name" value="Ribosomal_bS20"/>
    <property type="match status" value="1"/>
</dbReference>
<dbReference type="InterPro" id="IPR002583">
    <property type="entry name" value="Ribosomal_bS20"/>
</dbReference>
<dbReference type="InterPro" id="IPR036510">
    <property type="entry name" value="Ribosomal_bS20_sf"/>
</dbReference>
<dbReference type="NCBIfam" id="TIGR00029">
    <property type="entry name" value="S20"/>
    <property type="match status" value="1"/>
</dbReference>
<dbReference type="PANTHER" id="PTHR33398">
    <property type="entry name" value="30S RIBOSOMAL PROTEIN S20"/>
    <property type="match status" value="1"/>
</dbReference>
<dbReference type="PANTHER" id="PTHR33398:SF1">
    <property type="entry name" value="SMALL RIBOSOMAL SUBUNIT PROTEIN BS20C"/>
    <property type="match status" value="1"/>
</dbReference>
<dbReference type="Pfam" id="PF01649">
    <property type="entry name" value="Ribosomal_S20p"/>
    <property type="match status" value="1"/>
</dbReference>
<dbReference type="SUPFAM" id="SSF46992">
    <property type="entry name" value="Ribosomal protein S20"/>
    <property type="match status" value="1"/>
</dbReference>
<name>RS20_ECO45</name>
<feature type="chain" id="PRO_1000126438" description="Small ribosomal subunit protein bS20">
    <location>
        <begin position="1"/>
        <end position="87"/>
    </location>
</feature>
<feature type="region of interest" description="Disordered" evidence="2">
    <location>
        <begin position="1"/>
        <end position="26"/>
    </location>
</feature>
<protein>
    <recommendedName>
        <fullName evidence="1">Small ribosomal subunit protein bS20</fullName>
    </recommendedName>
    <alternativeName>
        <fullName evidence="3">30S ribosomal protein S20</fullName>
    </alternativeName>
</protein>
<comment type="function">
    <text evidence="1">Binds directly to 16S ribosomal RNA.</text>
</comment>
<comment type="similarity">
    <text evidence="1">Belongs to the bacterial ribosomal protein bS20 family.</text>
</comment>